<reference key="1">
    <citation type="journal article" date="2006" name="Proc. Natl. Acad. Sci. U.S.A.">
        <title>Molecular genetic anatomy of inter- and intraserotype variation in the human bacterial pathogen group A Streptococcus.</title>
        <authorList>
            <person name="Beres S.B."/>
            <person name="Richter E.W."/>
            <person name="Nagiec M.J."/>
            <person name="Sumby P."/>
            <person name="Porcella S.F."/>
            <person name="DeLeo F.R."/>
            <person name="Musser J.M."/>
        </authorList>
    </citation>
    <scope>NUCLEOTIDE SEQUENCE [LARGE SCALE GENOMIC DNA]</scope>
    <source>
        <strain>MGAS10270</strain>
    </source>
</reference>
<keyword id="KW-0131">Cell cycle</keyword>
<keyword id="KW-0132">Cell division</keyword>
<keyword id="KW-1003">Cell membrane</keyword>
<keyword id="KW-0133">Cell shape</keyword>
<keyword id="KW-0961">Cell wall biogenesis/degradation</keyword>
<keyword id="KW-0460">Magnesium</keyword>
<keyword id="KW-0472">Membrane</keyword>
<keyword id="KW-0479">Metal-binding</keyword>
<keyword id="KW-0573">Peptidoglycan synthesis</keyword>
<keyword id="KW-0808">Transferase</keyword>
<keyword id="KW-0812">Transmembrane</keyword>
<keyword id="KW-1133">Transmembrane helix</keyword>
<comment type="function">
    <text evidence="1">Catalyzes the initial step of the lipid cycle reactions in the biosynthesis of the cell wall peptidoglycan: transfers peptidoglycan precursor phospho-MurNAc-pentapeptide from UDP-MurNAc-pentapeptide onto the lipid carrier undecaprenyl phosphate, yielding undecaprenyl-pyrophosphoryl-MurNAc-pentapeptide, known as lipid I.</text>
</comment>
<comment type="catalytic activity">
    <reaction evidence="1">
        <text>UDP-N-acetyl-alpha-D-muramoyl-L-alanyl-gamma-D-glutamyl-L-lysyl-D-alanyl-D-alanine + di-trans,octa-cis-undecaprenyl phosphate = Mur2Ac(oyl-L-Ala-gamma-D-Glu-L-Lys-D-Ala-D-Ala)-di-trans,octa-cis-undecaprenyl diphosphate + UMP</text>
        <dbReference type="Rhea" id="RHEA:21920"/>
        <dbReference type="ChEBI" id="CHEBI:57865"/>
        <dbReference type="ChEBI" id="CHEBI:60032"/>
        <dbReference type="ChEBI" id="CHEBI:60392"/>
        <dbReference type="ChEBI" id="CHEBI:70758"/>
        <dbReference type="EC" id="2.7.8.13"/>
    </reaction>
</comment>
<comment type="cofactor">
    <cofactor evidence="1">
        <name>Mg(2+)</name>
        <dbReference type="ChEBI" id="CHEBI:18420"/>
    </cofactor>
</comment>
<comment type="pathway">
    <text evidence="1">Cell wall biogenesis; peptidoglycan biosynthesis.</text>
</comment>
<comment type="subcellular location">
    <subcellularLocation>
        <location evidence="1">Cell membrane</location>
        <topology evidence="1">Multi-pass membrane protein</topology>
    </subcellularLocation>
</comment>
<comment type="similarity">
    <text evidence="1">Belongs to the glycosyltransferase 4 family. MraY subfamily.</text>
</comment>
<evidence type="ECO:0000255" key="1">
    <source>
        <dbReference type="HAMAP-Rule" id="MF_00038"/>
    </source>
</evidence>
<name>MRAY_STRPD</name>
<gene>
    <name evidence="1" type="primary">mraY</name>
    <name type="ordered locus">MGAS10270_Spy1483</name>
</gene>
<proteinExistence type="inferred from homology"/>
<sequence length="336" mass="36924">MFLTLIAAIISFMVSAFTMPYFIKFYQLKKIGGQQMHEDVKQHLAKAGTPTMGGTVFLLVATAVSLLVSLFSIKNTQSLALISGILSIVVIYGIIGFLDDFLKIFKQINEGLTAKQKLALQLVGGLMFYFLHVSPSGISSINVFGYQLPLGIFYLFFVLFWVVGFSNAVNLTDGIDGLASISVVISLVTYGVIAYVQSQFDVLLLIGAMIGALLGFFCFNHKPAKVFMGDVGSLALGAMLAAISIALRQEWTLLIIGIVYVLETSSVMLQVSYFKYTKKKYGEGRRIFRMTPFHHHLELGGLSGKGKKWSEWQVDAFLWGVGSLASLLVLAILYVF</sequence>
<feature type="chain" id="PRO_1000003075" description="Phospho-N-acetylmuramoyl-pentapeptide-transferase">
    <location>
        <begin position="1"/>
        <end position="336"/>
    </location>
</feature>
<feature type="transmembrane region" description="Helical" evidence="1">
    <location>
        <begin position="3"/>
        <end position="23"/>
    </location>
</feature>
<feature type="transmembrane region" description="Helical" evidence="1">
    <location>
        <begin position="53"/>
        <end position="73"/>
    </location>
</feature>
<feature type="transmembrane region" description="Helical" evidence="1">
    <location>
        <begin position="78"/>
        <end position="98"/>
    </location>
</feature>
<feature type="transmembrane region" description="Helical" evidence="1">
    <location>
        <begin position="118"/>
        <end position="138"/>
    </location>
</feature>
<feature type="transmembrane region" description="Helical" evidence="1">
    <location>
        <begin position="143"/>
        <end position="163"/>
    </location>
</feature>
<feature type="transmembrane region" description="Helical" evidence="1">
    <location>
        <begin position="174"/>
        <end position="194"/>
    </location>
</feature>
<feature type="transmembrane region" description="Helical" evidence="1">
    <location>
        <begin position="200"/>
        <end position="220"/>
    </location>
</feature>
<feature type="transmembrane region" description="Helical" evidence="1">
    <location>
        <begin position="226"/>
        <end position="246"/>
    </location>
</feature>
<feature type="transmembrane region" description="Helical" evidence="1">
    <location>
        <begin position="251"/>
        <end position="271"/>
    </location>
</feature>
<feature type="transmembrane region" description="Helical" evidence="1">
    <location>
        <begin position="316"/>
        <end position="336"/>
    </location>
</feature>
<protein>
    <recommendedName>
        <fullName evidence="1">Phospho-N-acetylmuramoyl-pentapeptide-transferase</fullName>
        <ecNumber evidence="1">2.7.8.13</ecNumber>
    </recommendedName>
    <alternativeName>
        <fullName evidence="1">UDP-MurNAc-pentapeptide phosphotransferase</fullName>
    </alternativeName>
</protein>
<dbReference type="EC" id="2.7.8.13" evidence="1"/>
<dbReference type="EMBL" id="CP000260">
    <property type="protein sequence ID" value="ABF34548.1"/>
    <property type="molecule type" value="Genomic_DNA"/>
</dbReference>
<dbReference type="SMR" id="Q1JFL1"/>
<dbReference type="KEGG" id="sph:MGAS10270_Spy1483"/>
<dbReference type="HOGENOM" id="CLU_023982_0_1_9"/>
<dbReference type="UniPathway" id="UPA00219"/>
<dbReference type="Proteomes" id="UP000002436">
    <property type="component" value="Chromosome"/>
</dbReference>
<dbReference type="GO" id="GO:0005886">
    <property type="term" value="C:plasma membrane"/>
    <property type="evidence" value="ECO:0007669"/>
    <property type="project" value="UniProtKB-SubCell"/>
</dbReference>
<dbReference type="GO" id="GO:0046872">
    <property type="term" value="F:metal ion binding"/>
    <property type="evidence" value="ECO:0007669"/>
    <property type="project" value="UniProtKB-KW"/>
</dbReference>
<dbReference type="GO" id="GO:0008963">
    <property type="term" value="F:phospho-N-acetylmuramoyl-pentapeptide-transferase activity"/>
    <property type="evidence" value="ECO:0007669"/>
    <property type="project" value="UniProtKB-UniRule"/>
</dbReference>
<dbReference type="GO" id="GO:0051301">
    <property type="term" value="P:cell division"/>
    <property type="evidence" value="ECO:0007669"/>
    <property type="project" value="UniProtKB-KW"/>
</dbReference>
<dbReference type="GO" id="GO:0071555">
    <property type="term" value="P:cell wall organization"/>
    <property type="evidence" value="ECO:0007669"/>
    <property type="project" value="UniProtKB-KW"/>
</dbReference>
<dbReference type="GO" id="GO:0009252">
    <property type="term" value="P:peptidoglycan biosynthetic process"/>
    <property type="evidence" value="ECO:0007669"/>
    <property type="project" value="UniProtKB-UniRule"/>
</dbReference>
<dbReference type="GO" id="GO:0008360">
    <property type="term" value="P:regulation of cell shape"/>
    <property type="evidence" value="ECO:0007669"/>
    <property type="project" value="UniProtKB-KW"/>
</dbReference>
<dbReference type="CDD" id="cd06852">
    <property type="entry name" value="GT_MraY"/>
    <property type="match status" value="1"/>
</dbReference>
<dbReference type="HAMAP" id="MF_00038">
    <property type="entry name" value="MraY"/>
    <property type="match status" value="1"/>
</dbReference>
<dbReference type="InterPro" id="IPR000715">
    <property type="entry name" value="Glycosyl_transferase_4"/>
</dbReference>
<dbReference type="InterPro" id="IPR003524">
    <property type="entry name" value="PNAcMuramoyl-5peptid_Trfase"/>
</dbReference>
<dbReference type="InterPro" id="IPR018480">
    <property type="entry name" value="PNAcMuramoyl-5peptid_Trfase_CS"/>
</dbReference>
<dbReference type="NCBIfam" id="TIGR00445">
    <property type="entry name" value="mraY"/>
    <property type="match status" value="1"/>
</dbReference>
<dbReference type="PANTHER" id="PTHR22926">
    <property type="entry name" value="PHOSPHO-N-ACETYLMURAMOYL-PENTAPEPTIDE-TRANSFERASE"/>
    <property type="match status" value="1"/>
</dbReference>
<dbReference type="PANTHER" id="PTHR22926:SF5">
    <property type="entry name" value="PHOSPHO-N-ACETYLMURAMOYL-PENTAPEPTIDE-TRANSFERASE HOMOLOG"/>
    <property type="match status" value="1"/>
</dbReference>
<dbReference type="Pfam" id="PF00953">
    <property type="entry name" value="Glycos_transf_4"/>
    <property type="match status" value="1"/>
</dbReference>
<dbReference type="Pfam" id="PF10555">
    <property type="entry name" value="MraY_sig1"/>
    <property type="match status" value="1"/>
</dbReference>
<dbReference type="PROSITE" id="PS01348">
    <property type="entry name" value="MRAY_2"/>
    <property type="match status" value="1"/>
</dbReference>
<accession>Q1JFL1</accession>
<organism>
    <name type="scientific">Streptococcus pyogenes serotype M2 (strain MGAS10270)</name>
    <dbReference type="NCBI Taxonomy" id="370552"/>
    <lineage>
        <taxon>Bacteria</taxon>
        <taxon>Bacillati</taxon>
        <taxon>Bacillota</taxon>
        <taxon>Bacilli</taxon>
        <taxon>Lactobacillales</taxon>
        <taxon>Streptococcaceae</taxon>
        <taxon>Streptococcus</taxon>
    </lineage>
</organism>